<name>CITD_STRU0</name>
<feature type="chain" id="PRO_1000148565" description="Citrate lyase acyl carrier protein">
    <location>
        <begin position="1"/>
        <end position="101"/>
    </location>
</feature>
<feature type="modified residue" description="O-(phosphoribosyl dephospho-coenzyme A)serine" evidence="1">
    <location>
        <position position="14"/>
    </location>
</feature>
<proteinExistence type="inferred from homology"/>
<dbReference type="EMBL" id="AM946015">
    <property type="protein sequence ID" value="CAR43402.1"/>
    <property type="molecule type" value="Genomic_DNA"/>
</dbReference>
<dbReference type="RefSeq" id="WP_015911893.1">
    <property type="nucleotide sequence ID" value="NC_012004.1"/>
</dbReference>
<dbReference type="SMR" id="B9DVN4"/>
<dbReference type="STRING" id="218495.SUB1589"/>
<dbReference type="GeneID" id="93826912"/>
<dbReference type="KEGG" id="sub:SUB1589"/>
<dbReference type="eggNOG" id="COG3052">
    <property type="taxonomic scope" value="Bacteria"/>
</dbReference>
<dbReference type="HOGENOM" id="CLU_158489_0_0_9"/>
<dbReference type="OrthoDB" id="1120942at2"/>
<dbReference type="Proteomes" id="UP000000449">
    <property type="component" value="Chromosome"/>
</dbReference>
<dbReference type="GO" id="GO:0005737">
    <property type="term" value="C:cytoplasm"/>
    <property type="evidence" value="ECO:0007669"/>
    <property type="project" value="UniProtKB-SubCell"/>
</dbReference>
<dbReference type="HAMAP" id="MF_00805">
    <property type="entry name" value="CitD"/>
    <property type="match status" value="1"/>
</dbReference>
<dbReference type="InterPro" id="IPR006495">
    <property type="entry name" value="CitD"/>
</dbReference>
<dbReference type="InterPro" id="IPR023439">
    <property type="entry name" value="Mal_deCO2ase/Cit_lyase_ACP"/>
</dbReference>
<dbReference type="NCBIfam" id="TIGR01608">
    <property type="entry name" value="citD"/>
    <property type="match status" value="1"/>
</dbReference>
<dbReference type="NCBIfam" id="NF009726">
    <property type="entry name" value="PRK13253.1"/>
    <property type="match status" value="1"/>
</dbReference>
<dbReference type="Pfam" id="PF06857">
    <property type="entry name" value="ACP"/>
    <property type="match status" value="1"/>
</dbReference>
<dbReference type="PIRSF" id="PIRSF002736">
    <property type="entry name" value="Citrt_lyas_gamma"/>
    <property type="match status" value="1"/>
</dbReference>
<evidence type="ECO:0000255" key="1">
    <source>
        <dbReference type="HAMAP-Rule" id="MF_00805"/>
    </source>
</evidence>
<accession>B9DVN4</accession>
<protein>
    <recommendedName>
        <fullName evidence="1">Citrate lyase acyl carrier protein</fullName>
    </recommendedName>
    <alternativeName>
        <fullName evidence="1">Citrate lyase gamma chain</fullName>
    </alternativeName>
</protein>
<comment type="function">
    <text evidence="1">Covalent carrier of the coenzyme of citrate lyase.</text>
</comment>
<comment type="subunit">
    <text evidence="1">Oligomer with a subunit composition of (alpha,beta,gamma)6.</text>
</comment>
<comment type="subcellular location">
    <subcellularLocation>
        <location evidence="1">Cytoplasm</location>
    </subcellularLocation>
</comment>
<comment type="similarity">
    <text evidence="1">Belongs to the CitD family.</text>
</comment>
<keyword id="KW-0963">Cytoplasm</keyword>
<keyword id="KW-0597">Phosphoprotein</keyword>
<keyword id="KW-1185">Reference proteome</keyword>
<gene>
    <name evidence="1" type="primary">citD</name>
    <name type="ordered locus">SUB1589</name>
</gene>
<sequence>MDIMQTAVAGSLESSDIMITVNPATDGITIDLESSVEKQFGRRIRQVIEETLKHLGVNGVLVQAVDKGALDCTIQARTIAAVHRAAGLDQYNWKEIDSWNV</sequence>
<organism>
    <name type="scientific">Streptococcus uberis (strain ATCC BAA-854 / 0140J)</name>
    <dbReference type="NCBI Taxonomy" id="218495"/>
    <lineage>
        <taxon>Bacteria</taxon>
        <taxon>Bacillati</taxon>
        <taxon>Bacillota</taxon>
        <taxon>Bacilli</taxon>
        <taxon>Lactobacillales</taxon>
        <taxon>Streptococcaceae</taxon>
        <taxon>Streptococcus</taxon>
    </lineage>
</organism>
<reference key="1">
    <citation type="journal article" date="2009" name="BMC Genomics">
        <title>Evidence for niche adaptation in the genome of the bovine pathogen Streptococcus uberis.</title>
        <authorList>
            <person name="Ward P.N."/>
            <person name="Holden M.T.G."/>
            <person name="Leigh J.A."/>
            <person name="Lennard N."/>
            <person name="Bignell A."/>
            <person name="Barron A."/>
            <person name="Clark L."/>
            <person name="Quail M.A."/>
            <person name="Woodward J."/>
            <person name="Barrell B.G."/>
            <person name="Egan S.A."/>
            <person name="Field T.R."/>
            <person name="Maskell D."/>
            <person name="Kehoe M."/>
            <person name="Dowson C.G."/>
            <person name="Chanter N."/>
            <person name="Whatmore A.M."/>
            <person name="Bentley S.D."/>
            <person name="Parkhill J."/>
        </authorList>
    </citation>
    <scope>NUCLEOTIDE SEQUENCE [LARGE SCALE GENOMIC DNA]</scope>
    <source>
        <strain>ATCC BAA-854 / 0140J</strain>
    </source>
</reference>